<evidence type="ECO:0000255" key="1">
    <source>
        <dbReference type="HAMAP-Rule" id="MF_03217"/>
    </source>
</evidence>
<evidence type="ECO:0000256" key="2">
    <source>
        <dbReference type="SAM" id="MobiDB-lite"/>
    </source>
</evidence>
<dbReference type="EC" id="2.1.1.17" evidence="1"/>
<dbReference type="EMBL" id="FM992695">
    <property type="protein sequence ID" value="CAX39764.1"/>
    <property type="molecule type" value="Genomic_DNA"/>
</dbReference>
<dbReference type="RefSeq" id="XP_002421820.1">
    <property type="nucleotide sequence ID" value="XM_002421775.1"/>
</dbReference>
<dbReference type="GeneID" id="8049572"/>
<dbReference type="KEGG" id="cdu:CD36_27490"/>
<dbReference type="CGD" id="CAL0000160259">
    <property type="gene designation" value="Cd36_27490"/>
</dbReference>
<dbReference type="VEuPathDB" id="FungiDB:CD36_27490"/>
<dbReference type="eggNOG" id="ENOG502QRGH">
    <property type="taxonomic scope" value="Eukaryota"/>
</dbReference>
<dbReference type="HOGENOM" id="CLU_005987_0_1_1"/>
<dbReference type="OrthoDB" id="4583at2759"/>
<dbReference type="UniPathway" id="UPA00753"/>
<dbReference type="Proteomes" id="UP000002605">
    <property type="component" value="Chromosome R"/>
</dbReference>
<dbReference type="GO" id="GO:0005789">
    <property type="term" value="C:endoplasmic reticulum membrane"/>
    <property type="evidence" value="ECO:0007669"/>
    <property type="project" value="UniProtKB-SubCell"/>
</dbReference>
<dbReference type="GO" id="GO:0004608">
    <property type="term" value="F:phosphatidylethanolamine N-methyltransferase activity"/>
    <property type="evidence" value="ECO:0007669"/>
    <property type="project" value="UniProtKB-UniRule"/>
</dbReference>
<dbReference type="GO" id="GO:0032259">
    <property type="term" value="P:methylation"/>
    <property type="evidence" value="ECO:0007669"/>
    <property type="project" value="UniProtKB-KW"/>
</dbReference>
<dbReference type="GO" id="GO:0006656">
    <property type="term" value="P:phosphatidylcholine biosynthetic process"/>
    <property type="evidence" value="ECO:0007669"/>
    <property type="project" value="UniProtKB-UniRule"/>
</dbReference>
<dbReference type="FunFam" id="1.20.120.1630:FF:000016">
    <property type="entry name" value="Phosphatidylethanolamine N-methyltransferase"/>
    <property type="match status" value="1"/>
</dbReference>
<dbReference type="Gene3D" id="1.20.120.1630">
    <property type="match status" value="1"/>
</dbReference>
<dbReference type="Gene3D" id="2.60.40.2840">
    <property type="match status" value="1"/>
</dbReference>
<dbReference type="HAMAP" id="MF_03217">
    <property type="entry name" value="PEMT"/>
    <property type="match status" value="1"/>
</dbReference>
<dbReference type="InterPro" id="IPR007318">
    <property type="entry name" value="Phopholipid_MeTrfase"/>
</dbReference>
<dbReference type="InterPro" id="IPR016219">
    <property type="entry name" value="Phosphatid-EA_MeTrfase_fun"/>
</dbReference>
<dbReference type="PANTHER" id="PTHR32138">
    <property type="entry name" value="PHOSPHATIDYLETHANOLAMINE N-METHYLTRANSFERASE"/>
    <property type="match status" value="1"/>
</dbReference>
<dbReference type="PANTHER" id="PTHR32138:SF0">
    <property type="entry name" value="PHOSPHATIDYLETHANOLAMINE N-METHYLTRANSFERASE"/>
    <property type="match status" value="1"/>
</dbReference>
<dbReference type="Pfam" id="PF04191">
    <property type="entry name" value="PEMT"/>
    <property type="match status" value="2"/>
</dbReference>
<dbReference type="PIRSF" id="PIRSF000383">
    <property type="entry name" value="PEAMT"/>
    <property type="match status" value="1"/>
</dbReference>
<dbReference type="PROSITE" id="PS50244">
    <property type="entry name" value="S5A_REDUCTASE"/>
    <property type="match status" value="1"/>
</dbReference>
<dbReference type="PROSITE" id="PS51598">
    <property type="entry name" value="SAM_CHO2"/>
    <property type="match status" value="1"/>
</dbReference>
<feature type="chain" id="PRO_0000405883" description="Phosphatidylethanolamine N-methyltransferase">
    <location>
        <begin position="1"/>
        <end position="887"/>
    </location>
</feature>
<feature type="topological domain" description="Lumenal" evidence="1">
    <location>
        <begin position="1"/>
        <end position="63"/>
    </location>
</feature>
<feature type="transmembrane region" description="Helical" evidence="1">
    <location>
        <begin position="64"/>
        <end position="84"/>
    </location>
</feature>
<feature type="topological domain" description="Cytoplasmic" evidence="1">
    <location>
        <begin position="85"/>
        <end position="91"/>
    </location>
</feature>
<feature type="transmembrane region" description="Helical" evidence="1">
    <location>
        <begin position="92"/>
        <end position="112"/>
    </location>
</feature>
<feature type="topological domain" description="Lumenal" evidence="1">
    <location>
        <begin position="113"/>
        <end position="173"/>
    </location>
</feature>
<feature type="transmembrane region" description="Helical" evidence="1">
    <location>
        <begin position="174"/>
        <end position="194"/>
    </location>
</feature>
<feature type="topological domain" description="Cytoplasmic" evidence="1">
    <location>
        <begin position="195"/>
        <end position="205"/>
    </location>
</feature>
<feature type="transmembrane region" description="Helical" evidence="1">
    <location>
        <begin position="206"/>
        <end position="226"/>
    </location>
</feature>
<feature type="topological domain" description="Lumenal" evidence="1">
    <location>
        <begin position="227"/>
        <end position="261"/>
    </location>
</feature>
<feature type="transmembrane region" description="Helical" evidence="1">
    <location>
        <begin position="262"/>
        <end position="282"/>
    </location>
</feature>
<feature type="topological domain" description="Cytoplasmic" evidence="1">
    <location>
        <begin position="283"/>
        <end position="284"/>
    </location>
</feature>
<feature type="transmembrane region" description="Helical" evidence="1">
    <location>
        <begin position="285"/>
        <end position="305"/>
    </location>
</feature>
<feature type="topological domain" description="Lumenal" evidence="1">
    <location>
        <begin position="306"/>
        <end position="354"/>
    </location>
</feature>
<feature type="transmembrane region" description="Helical" evidence="1">
    <location>
        <begin position="355"/>
        <end position="375"/>
    </location>
</feature>
<feature type="topological domain" description="Cytoplasmic" evidence="1">
    <location>
        <begin position="376"/>
        <end position="377"/>
    </location>
</feature>
<feature type="transmembrane region" description="Helical" evidence="1">
    <location>
        <begin position="378"/>
        <end position="398"/>
    </location>
</feature>
<feature type="topological domain" description="Lumenal" evidence="1">
    <location>
        <begin position="399"/>
        <end position="423"/>
    </location>
</feature>
<feature type="transmembrane region" description="Helical" evidence="1">
    <location>
        <begin position="424"/>
        <end position="444"/>
    </location>
</feature>
<feature type="topological domain" description="Cytoplasmic" evidence="1">
    <location>
        <begin position="445"/>
        <end position="472"/>
    </location>
</feature>
<feature type="transmembrane region" description="Helical" evidence="1">
    <location>
        <begin position="473"/>
        <end position="493"/>
    </location>
</feature>
<feature type="topological domain" description="Lumenal" evidence="1">
    <location>
        <begin position="494"/>
        <end position="530"/>
    </location>
</feature>
<feature type="transmembrane region" description="Helical" evidence="1">
    <location>
        <begin position="531"/>
        <end position="551"/>
    </location>
</feature>
<feature type="topological domain" description="Cytoplasmic" evidence="1">
    <location>
        <begin position="552"/>
        <end position="887"/>
    </location>
</feature>
<feature type="region of interest" description="Disordered" evidence="2">
    <location>
        <begin position="610"/>
        <end position="631"/>
    </location>
</feature>
<feature type="compositionally biased region" description="Low complexity" evidence="2">
    <location>
        <begin position="614"/>
        <end position="631"/>
    </location>
</feature>
<sequence>MTSIINNTNSTVFDSTNNGNMAILEPVQPVSKGPKGITFSGQTFVVPETHDMVKTLFDPTVRKSNFELIILGCLFSNLLVFLIPNNQIRIYIFIALYIFWRLSYNFGIGWLLQNQSNHNLLVSWSQKYKLFEPGNTSFLAKSIQNEIKSQRGENYDIKSMPVEFNTWLIFRKFVDLILMSDFITFCCVVYCSAIKNNYQFFNNQSSWLVYSRIVFGTGLILFNLWVKVNAHNTIKDYAWYWGDFFFRQINNEELIFDGVFEMVPHPMYSVGYVGYYGFALIAKSYVVLAIAIFGHFLQMIFLHYIENPHIDKIYGPSKNEINLIKILKLKDLKNFDNLKPLVGLTNFNWMRASDIVNLVLSLTYGIIIPLFANSIKSLFILTVGMKLFESISINLLLTLQSYFKVVTKWSLSNDIPVEKSLSNWAVLYNSLINLTYSSLFGMNLGYFLQKSSSSSSSSSSSGLLFSDWFYLRIFLGLLLVYTQFWINFSIIDSIGYFGWFYGDFFIPKSQSSIKNITTAGVYRYLNNPEQIFGVCGVMGIFMIYPTVENFICVGLWVVNNFIRINFIEKSHMVKLYGEQEVNRDSGVTKTVKKHLLPEVIQRRMSNDEAYARTNGISNGRRKSSNNSHSNSVADSLDNFIRDLRNSSTKLSQQKLIELSQNLSFANSDYKLTIDGLMQSTEGELKYTTIGTPVTISWTSPEKNHSVRDWVGLYKIVQTSYSRNKTILSSAGRWTWCKEANGTFIFDREKLFWEEGVYEFRYHLDGKHEVAYISEPFEIKSVELDVPAIEEYANEFAENLKLEIFDKVINLTNINEAISPIANQSDNVIEVYKLISSMISKSTKINITYKIFLNHDLLSIKDVAIKLINIKHVLEELSFNITTDKKDI</sequence>
<gene>
    <name type="primary">CHO2</name>
    <name type="ORF">CD36_27490</name>
</gene>
<keyword id="KW-0256">Endoplasmic reticulum</keyword>
<keyword id="KW-0444">Lipid biosynthesis</keyword>
<keyword id="KW-0443">Lipid metabolism</keyword>
<keyword id="KW-0472">Membrane</keyword>
<keyword id="KW-0489">Methyltransferase</keyword>
<keyword id="KW-0594">Phospholipid biosynthesis</keyword>
<keyword id="KW-1208">Phospholipid metabolism</keyword>
<keyword id="KW-0949">S-adenosyl-L-methionine</keyword>
<keyword id="KW-0808">Transferase</keyword>
<keyword id="KW-0812">Transmembrane</keyword>
<keyword id="KW-1133">Transmembrane helix</keyword>
<name>CHO2_CANDC</name>
<proteinExistence type="inferred from homology"/>
<protein>
    <recommendedName>
        <fullName evidence="1">Phosphatidylethanolamine N-methyltransferase</fullName>
        <shortName evidence="1">PE methyltransferase</shortName>
        <shortName evidence="1">PEAMT</shortName>
        <shortName evidence="1">PEMT</shortName>
        <ecNumber evidence="1">2.1.1.17</ecNumber>
    </recommendedName>
</protein>
<reference key="1">
    <citation type="journal article" date="2009" name="Genome Res.">
        <title>Comparative genomics of the fungal pathogens Candida dubliniensis and Candida albicans.</title>
        <authorList>
            <person name="Jackson A.P."/>
            <person name="Gamble J.A."/>
            <person name="Yeomans T."/>
            <person name="Moran G.P."/>
            <person name="Saunders D."/>
            <person name="Harris D."/>
            <person name="Aslett M."/>
            <person name="Barrell J.F."/>
            <person name="Butler G."/>
            <person name="Citiulo F."/>
            <person name="Coleman D.C."/>
            <person name="de Groot P.W.J."/>
            <person name="Goodwin T.J."/>
            <person name="Quail M.A."/>
            <person name="McQuillan J."/>
            <person name="Munro C.A."/>
            <person name="Pain A."/>
            <person name="Poulter R.T."/>
            <person name="Rajandream M.A."/>
            <person name="Renauld H."/>
            <person name="Spiering M.J."/>
            <person name="Tivey A."/>
            <person name="Gow N.A.R."/>
            <person name="Barrell B."/>
            <person name="Sullivan D.J."/>
            <person name="Berriman M."/>
        </authorList>
    </citation>
    <scope>NUCLEOTIDE SEQUENCE [LARGE SCALE GENOMIC DNA]</scope>
    <source>
        <strain>CD36 / ATCC MYA-646 / CBS 7987 / NCPF 3949 / NRRL Y-17841</strain>
    </source>
</reference>
<comment type="function">
    <text evidence="1">Catalyzes the first step of the methylation pathway of phosphatidylcholine biosynthesis, the SAM-dependent methylation of phosphatidylethanolamine (PE) to phosphatidylmonomethylethanolamine (PMME).</text>
</comment>
<comment type="catalytic activity">
    <reaction evidence="1">
        <text>a 1,2-diacyl-sn-glycero-3-phosphoethanolamine + S-adenosyl-L-methionine = a 1,2-diacyl-sn-glycero-3-phospho-N-methylethanolamine + S-adenosyl-L-homocysteine + H(+)</text>
        <dbReference type="Rhea" id="RHEA:11164"/>
        <dbReference type="ChEBI" id="CHEBI:15378"/>
        <dbReference type="ChEBI" id="CHEBI:57856"/>
        <dbReference type="ChEBI" id="CHEBI:59789"/>
        <dbReference type="ChEBI" id="CHEBI:64573"/>
        <dbReference type="ChEBI" id="CHEBI:64612"/>
        <dbReference type="EC" id="2.1.1.17"/>
    </reaction>
</comment>
<comment type="pathway">
    <text evidence="1">Phospholipid metabolism; phosphatidylcholine biosynthesis.</text>
</comment>
<comment type="subcellular location">
    <subcellularLocation>
        <location evidence="1">Endoplasmic reticulum membrane</location>
        <topology evidence="1">Multi-pass membrane protein</topology>
    </subcellularLocation>
</comment>
<comment type="similarity">
    <text evidence="1">Belongs to the class VI-like SAM-binding methyltransferase superfamily. CHO2 family.</text>
</comment>
<organism>
    <name type="scientific">Candida dubliniensis (strain CD36 / ATCC MYA-646 / CBS 7987 / NCPF 3949 / NRRL Y-17841)</name>
    <name type="common">Yeast</name>
    <dbReference type="NCBI Taxonomy" id="573826"/>
    <lineage>
        <taxon>Eukaryota</taxon>
        <taxon>Fungi</taxon>
        <taxon>Dikarya</taxon>
        <taxon>Ascomycota</taxon>
        <taxon>Saccharomycotina</taxon>
        <taxon>Pichiomycetes</taxon>
        <taxon>Debaryomycetaceae</taxon>
        <taxon>Candida/Lodderomyces clade</taxon>
        <taxon>Candida</taxon>
    </lineage>
</organism>
<accession>B9WL59</accession>